<feature type="initiator methionine" description="Removed; by host" evidence="1">
    <location>
        <position position="1"/>
    </location>
</feature>
<feature type="chain" id="PRO_0000099542" description="Entry-fusion complex protein OPG094">
    <location>
        <begin position="2"/>
        <end position="340"/>
    </location>
</feature>
<feature type="topological domain" description="Virion surface">
    <location>
        <begin position="2"/>
        <end position="319"/>
    </location>
</feature>
<feature type="transmembrane region" description="Helical; Signal-anchor for type II membrane protein" evidence="3">
    <location>
        <begin position="320"/>
        <end position="340"/>
    </location>
</feature>
<feature type="region of interest" description="Disordered" evidence="4">
    <location>
        <begin position="1"/>
        <end position="20"/>
    </location>
</feature>
<feature type="lipid moiety-binding region" description="N-myristoyl glycine; by host" evidence="2">
    <location>
        <position position="2"/>
    </location>
</feature>
<dbReference type="EMBL" id="AF095689">
    <property type="protein sequence ID" value="AAF33947.1"/>
    <property type="molecule type" value="Genomic_DNA"/>
</dbReference>
<dbReference type="SMR" id="Q9JFC1"/>
<dbReference type="Proteomes" id="UP000163220">
    <property type="component" value="Genome"/>
</dbReference>
<dbReference type="GO" id="GO:0016020">
    <property type="term" value="C:membrane"/>
    <property type="evidence" value="ECO:0007669"/>
    <property type="project" value="UniProtKB-KW"/>
</dbReference>
<dbReference type="GO" id="GO:0019031">
    <property type="term" value="C:viral envelope"/>
    <property type="evidence" value="ECO:0007669"/>
    <property type="project" value="UniProtKB-KW"/>
</dbReference>
<dbReference type="GO" id="GO:0055036">
    <property type="term" value="C:virion membrane"/>
    <property type="evidence" value="ECO:0007669"/>
    <property type="project" value="UniProtKB-SubCell"/>
</dbReference>
<dbReference type="GO" id="GO:0019064">
    <property type="term" value="P:fusion of virus membrane with host plasma membrane"/>
    <property type="evidence" value="ECO:0007669"/>
    <property type="project" value="UniProtKB-KW"/>
</dbReference>
<dbReference type="GO" id="GO:0046718">
    <property type="term" value="P:symbiont entry into host cell"/>
    <property type="evidence" value="ECO:0007669"/>
    <property type="project" value="UniProtKB-KW"/>
</dbReference>
<dbReference type="InterPro" id="IPR004251">
    <property type="entry name" value="Pox_virus_G9/A16"/>
</dbReference>
<dbReference type="Pfam" id="PF03003">
    <property type="entry name" value="Pox_G9-A16"/>
    <property type="match status" value="1"/>
</dbReference>
<name>PG094_VACCT</name>
<organismHost>
    <name type="scientific">Homo sapiens</name>
    <name type="common">Human</name>
    <dbReference type="NCBI Taxonomy" id="9606"/>
</organismHost>
<protein>
    <recommendedName>
        <fullName>Entry-fusion complex protein OPG094</fullName>
        <shortName>EFC protein OPG094</shortName>
    </recommendedName>
    <alternativeName>
        <fullName>Myristoylated protein G9</fullName>
    </alternativeName>
</protein>
<evidence type="ECO:0000250" key="1"/>
<evidence type="ECO:0000250" key="2">
    <source>
        <dbReference type="UniProtKB" id="P07611"/>
    </source>
</evidence>
<evidence type="ECO:0000255" key="3"/>
<evidence type="ECO:0000256" key="4">
    <source>
        <dbReference type="SAM" id="MobiDB-lite"/>
    </source>
</evidence>
<evidence type="ECO:0000305" key="5"/>
<sequence length="340" mass="38758">MGGGVSVELPKRDPPPGVPTDEMLLNVDKMHDVIAPAKLLEYVHIGPLAKDKEDKVKKRYPEFRLVNTGPGGLSALLRQSYNGTAPNCCRTFNRTHYWKKDGKISDKYEEGAVLESCWPDVHDTGKCDVDLFDWCQGDTFDRNICHQWIGSAFNRSNRTVEGQQSLINLYNKMQTLCSKDASVPICESFLHHLRAHNTEDSKEMIDYILRQQSADFKQKYMRCSYPTRDKLEESLKYAEPRECWDPECSNANVNFLLTRNYNNLGLCNIVRCNTSVNNLQMDKTSSLRLSCGLSNSDKFSTVPVNRAKVVQHNIKHSFDLKLHLISLLSLLVIWILIVAI</sequence>
<reference key="1">
    <citation type="submission" date="1998-09" db="EMBL/GenBank/DDBJ databases">
        <title>Complete genomic sequence of vaccinia virus (Tian Tan strain).</title>
        <authorList>
            <person name="Jin Q."/>
            <person name="Hou Y.D."/>
            <person name="Cheng N.H."/>
            <person name="Yao E.M."/>
            <person name="Cheng S.X."/>
            <person name="Yang X.K."/>
            <person name="Jing D.Y."/>
            <person name="Yu W.H."/>
            <person name="Yuan J.S."/>
            <person name="Ma X.J."/>
        </authorList>
    </citation>
    <scope>NUCLEOTIDE SEQUENCE [LARGE SCALE GENOMIC DNA]</scope>
</reference>
<proteinExistence type="inferred from homology"/>
<organism>
    <name type="scientific">Vaccinia virus (strain Tian Tan)</name>
    <name type="common">VACV</name>
    <dbReference type="NCBI Taxonomy" id="10253"/>
    <lineage>
        <taxon>Viruses</taxon>
        <taxon>Varidnaviria</taxon>
        <taxon>Bamfordvirae</taxon>
        <taxon>Nucleocytoviricota</taxon>
        <taxon>Pokkesviricetes</taxon>
        <taxon>Chitovirales</taxon>
        <taxon>Poxviridae</taxon>
        <taxon>Chordopoxvirinae</taxon>
        <taxon>Orthopoxvirus</taxon>
        <taxon>Vaccinia virus</taxon>
    </lineage>
</organism>
<gene>
    <name type="primary">OPG094</name>
    <name type="ORF">TG10R</name>
</gene>
<accession>Q9JFC1</accession>
<comment type="function">
    <text evidence="2">Component of the entry fusion complex (EFC), which consists of 11 proteins. During cell infection, this complex mediates entry of the virion core into the host cytoplasm by a two-step mechanism consisting of lipid mixing of the viral and cellular membranes and subsequent pore formation.</text>
</comment>
<comment type="subunit">
    <text evidence="2">Interacts with OPG143. Component of the entry fusion complex (EFC) composed of OPG053, OPG076, OPG086, OPG094, OPG095, OPG099, OPG107, OPG143, OPG104, OPG147 and OPG155. Except for OPG095 and OPG053, each of the EFC proteins is required for assembly or stability of the complex.</text>
</comment>
<comment type="subcellular location">
    <subcellularLocation>
        <location evidence="2">Virion membrane</location>
        <topology evidence="2">Single-pass type II membrane protein</topology>
    </subcellularLocation>
    <text evidence="2">Component of the mature virion (MV) membrane. The mature virion is located in the cytoplasm of infected cells and is probably released by cell lysis.</text>
</comment>
<comment type="induction">
    <text evidence="2">Expressed in the late phase of the viral replicative cycle.</text>
</comment>
<comment type="PTM">
    <text evidence="2">Unglycosylated because produced in viral factories instead of the classic ER -Golgi route.</text>
</comment>
<comment type="similarity">
    <text evidence="5">Belongs to the orthopoxvirus OPG086 family.</text>
</comment>
<keyword id="KW-1169">Fusion of virus membrane with host cell membrane</keyword>
<keyword id="KW-1168">Fusion of virus membrane with host membrane</keyword>
<keyword id="KW-0426">Late protein</keyword>
<keyword id="KW-0449">Lipoprotein</keyword>
<keyword id="KW-0472">Membrane</keyword>
<keyword id="KW-0519">Myristate</keyword>
<keyword id="KW-0735">Signal-anchor</keyword>
<keyword id="KW-0812">Transmembrane</keyword>
<keyword id="KW-1133">Transmembrane helix</keyword>
<keyword id="KW-0261">Viral envelope protein</keyword>
<keyword id="KW-1162">Viral penetration into host cytoplasm</keyword>
<keyword id="KW-0946">Virion</keyword>
<keyword id="KW-1160">Virus entry into host cell</keyword>